<evidence type="ECO:0000255" key="1">
    <source>
        <dbReference type="HAMAP-Rule" id="MF_00091"/>
    </source>
</evidence>
<reference key="1">
    <citation type="journal article" date="2009" name="J. Bacteriol.">
        <title>Complete genome sequence and comparative genome analysis of enteropathogenic Escherichia coli O127:H6 strain E2348/69.</title>
        <authorList>
            <person name="Iguchi A."/>
            <person name="Thomson N.R."/>
            <person name="Ogura Y."/>
            <person name="Saunders D."/>
            <person name="Ooka T."/>
            <person name="Henderson I.R."/>
            <person name="Harris D."/>
            <person name="Asadulghani M."/>
            <person name="Kurokawa K."/>
            <person name="Dean P."/>
            <person name="Kenny B."/>
            <person name="Quail M.A."/>
            <person name="Thurston S."/>
            <person name="Dougan G."/>
            <person name="Hayashi T."/>
            <person name="Parkhill J."/>
            <person name="Frankel G."/>
        </authorList>
    </citation>
    <scope>NUCLEOTIDE SEQUENCE [LARGE SCALE GENOMIC DNA]</scope>
    <source>
        <strain>E2348/69 / EPEC</strain>
    </source>
</reference>
<dbReference type="EC" id="4.4.1.21" evidence="1"/>
<dbReference type="EMBL" id="FM180568">
    <property type="protein sequence ID" value="CAS10503.1"/>
    <property type="molecule type" value="Genomic_DNA"/>
</dbReference>
<dbReference type="RefSeq" id="WP_001130211.1">
    <property type="nucleotide sequence ID" value="NC_011601.1"/>
</dbReference>
<dbReference type="SMR" id="B7UHB0"/>
<dbReference type="GeneID" id="93779324"/>
<dbReference type="KEGG" id="ecg:E2348C_2955"/>
<dbReference type="HOGENOM" id="CLU_107531_2_0_6"/>
<dbReference type="Proteomes" id="UP000008205">
    <property type="component" value="Chromosome"/>
</dbReference>
<dbReference type="GO" id="GO:0005506">
    <property type="term" value="F:iron ion binding"/>
    <property type="evidence" value="ECO:0007669"/>
    <property type="project" value="InterPro"/>
</dbReference>
<dbReference type="GO" id="GO:0043768">
    <property type="term" value="F:S-ribosylhomocysteine lyase activity"/>
    <property type="evidence" value="ECO:0007669"/>
    <property type="project" value="UniProtKB-UniRule"/>
</dbReference>
<dbReference type="GO" id="GO:0009372">
    <property type="term" value="P:quorum sensing"/>
    <property type="evidence" value="ECO:0007669"/>
    <property type="project" value="UniProtKB-UniRule"/>
</dbReference>
<dbReference type="FunFam" id="3.30.1360.80:FF:000001">
    <property type="entry name" value="S-ribosylhomocysteine lyase"/>
    <property type="match status" value="1"/>
</dbReference>
<dbReference type="Gene3D" id="3.30.1360.80">
    <property type="entry name" value="S-ribosylhomocysteinase (LuxS)"/>
    <property type="match status" value="1"/>
</dbReference>
<dbReference type="HAMAP" id="MF_00091">
    <property type="entry name" value="LuxS"/>
    <property type="match status" value="1"/>
</dbReference>
<dbReference type="InterPro" id="IPR037005">
    <property type="entry name" value="LuxS_sf"/>
</dbReference>
<dbReference type="InterPro" id="IPR011249">
    <property type="entry name" value="Metalloenz_LuxS/M16"/>
</dbReference>
<dbReference type="InterPro" id="IPR003815">
    <property type="entry name" value="S-ribosylhomocysteinase"/>
</dbReference>
<dbReference type="NCBIfam" id="NF002602">
    <property type="entry name" value="PRK02260.1-2"/>
    <property type="match status" value="1"/>
</dbReference>
<dbReference type="PANTHER" id="PTHR35799">
    <property type="entry name" value="S-RIBOSYLHOMOCYSTEINE LYASE"/>
    <property type="match status" value="1"/>
</dbReference>
<dbReference type="PANTHER" id="PTHR35799:SF1">
    <property type="entry name" value="S-RIBOSYLHOMOCYSTEINE LYASE"/>
    <property type="match status" value="1"/>
</dbReference>
<dbReference type="Pfam" id="PF02664">
    <property type="entry name" value="LuxS"/>
    <property type="match status" value="1"/>
</dbReference>
<dbReference type="PIRSF" id="PIRSF006160">
    <property type="entry name" value="AI2"/>
    <property type="match status" value="1"/>
</dbReference>
<dbReference type="PRINTS" id="PR01487">
    <property type="entry name" value="LUXSPROTEIN"/>
</dbReference>
<dbReference type="SUPFAM" id="SSF63411">
    <property type="entry name" value="LuxS/MPP-like metallohydrolase"/>
    <property type="match status" value="1"/>
</dbReference>
<sequence>MPLLDSFTVDHTRMEAPAVRVAKTMNTPHGDAITVFDLRFCVPNKEVMPERGIHTLEHLFAGFMRNHLNGNGVEIIDISPMGCRTGFYMSLIGTPDEQRVADAWKAAMEDVLKVQDQNQIPELNVYQCGTYQMHSLQEAQDIARSILERDVRINSNEELALPKEKLQELHI</sequence>
<organism>
    <name type="scientific">Escherichia coli O127:H6 (strain E2348/69 / EPEC)</name>
    <dbReference type="NCBI Taxonomy" id="574521"/>
    <lineage>
        <taxon>Bacteria</taxon>
        <taxon>Pseudomonadati</taxon>
        <taxon>Pseudomonadota</taxon>
        <taxon>Gammaproteobacteria</taxon>
        <taxon>Enterobacterales</taxon>
        <taxon>Enterobacteriaceae</taxon>
        <taxon>Escherichia</taxon>
    </lineage>
</organism>
<proteinExistence type="inferred from homology"/>
<feature type="chain" id="PRO_1000118536" description="S-ribosylhomocysteine lyase">
    <location>
        <begin position="1"/>
        <end position="171"/>
    </location>
</feature>
<feature type="binding site" evidence="1">
    <location>
        <position position="54"/>
    </location>
    <ligand>
        <name>Fe cation</name>
        <dbReference type="ChEBI" id="CHEBI:24875"/>
    </ligand>
</feature>
<feature type="binding site" evidence="1">
    <location>
        <position position="58"/>
    </location>
    <ligand>
        <name>Fe cation</name>
        <dbReference type="ChEBI" id="CHEBI:24875"/>
    </ligand>
</feature>
<feature type="binding site" evidence="1">
    <location>
        <position position="128"/>
    </location>
    <ligand>
        <name>Fe cation</name>
        <dbReference type="ChEBI" id="CHEBI:24875"/>
    </ligand>
</feature>
<accession>B7UHB0</accession>
<keyword id="KW-0071">Autoinducer synthesis</keyword>
<keyword id="KW-0408">Iron</keyword>
<keyword id="KW-0456">Lyase</keyword>
<keyword id="KW-0479">Metal-binding</keyword>
<keyword id="KW-0673">Quorum sensing</keyword>
<keyword id="KW-1185">Reference proteome</keyword>
<name>LUXS_ECO27</name>
<protein>
    <recommendedName>
        <fullName evidence="1">S-ribosylhomocysteine lyase</fullName>
        <ecNumber evidence="1">4.4.1.21</ecNumber>
    </recommendedName>
    <alternativeName>
        <fullName evidence="1">AI-2 synthesis protein</fullName>
    </alternativeName>
    <alternativeName>
        <fullName evidence="1">Autoinducer-2 production protein LuxS</fullName>
    </alternativeName>
</protein>
<comment type="function">
    <text evidence="1">Involved in the synthesis of autoinducer 2 (AI-2) which is secreted by bacteria and is used to communicate both the cell density and the metabolic potential of the environment. The regulation of gene expression in response to changes in cell density is called quorum sensing. Catalyzes the transformation of S-ribosylhomocysteine (RHC) to homocysteine (HC) and 4,5-dihydroxy-2,3-pentadione (DPD).</text>
</comment>
<comment type="catalytic activity">
    <reaction evidence="1">
        <text>S-(5-deoxy-D-ribos-5-yl)-L-homocysteine = (S)-4,5-dihydroxypentane-2,3-dione + L-homocysteine</text>
        <dbReference type="Rhea" id="RHEA:17753"/>
        <dbReference type="ChEBI" id="CHEBI:29484"/>
        <dbReference type="ChEBI" id="CHEBI:58195"/>
        <dbReference type="ChEBI" id="CHEBI:58199"/>
        <dbReference type="EC" id="4.4.1.21"/>
    </reaction>
</comment>
<comment type="cofactor">
    <cofactor evidence="1">
        <name>Fe cation</name>
        <dbReference type="ChEBI" id="CHEBI:24875"/>
    </cofactor>
    <text evidence="1">Binds 1 Fe cation per subunit.</text>
</comment>
<comment type="subunit">
    <text evidence="1">Homodimer.</text>
</comment>
<comment type="similarity">
    <text evidence="1">Belongs to the LuxS family.</text>
</comment>
<gene>
    <name evidence="1" type="primary">luxS</name>
    <name type="ordered locus">E2348C_2955</name>
</gene>